<proteinExistence type="inferred from homology"/>
<comment type="function">
    <text evidence="1">Catalyzes the transfer of the diacylglyceryl group from phosphatidylglycerol to the sulfhydryl group of the N-terminal cysteine of a prolipoprotein, the first step in the formation of mature lipoproteins.</text>
</comment>
<comment type="catalytic activity">
    <reaction evidence="1">
        <text>L-cysteinyl-[prolipoprotein] + a 1,2-diacyl-sn-glycero-3-phospho-(1'-sn-glycerol) = an S-1,2-diacyl-sn-glyceryl-L-cysteinyl-[prolipoprotein] + sn-glycerol 1-phosphate + H(+)</text>
        <dbReference type="Rhea" id="RHEA:56712"/>
        <dbReference type="Rhea" id="RHEA-COMP:14679"/>
        <dbReference type="Rhea" id="RHEA-COMP:14680"/>
        <dbReference type="ChEBI" id="CHEBI:15378"/>
        <dbReference type="ChEBI" id="CHEBI:29950"/>
        <dbReference type="ChEBI" id="CHEBI:57685"/>
        <dbReference type="ChEBI" id="CHEBI:64716"/>
        <dbReference type="ChEBI" id="CHEBI:140658"/>
        <dbReference type="EC" id="2.5.1.145"/>
    </reaction>
</comment>
<comment type="pathway">
    <text evidence="1">Protein modification; lipoprotein biosynthesis (diacylglyceryl transfer).</text>
</comment>
<comment type="subcellular location">
    <subcellularLocation>
        <location evidence="1">Cell inner membrane</location>
        <topology evidence="1">Multi-pass membrane protein</topology>
    </subcellularLocation>
</comment>
<comment type="similarity">
    <text evidence="1">Belongs to the Lgt family.</text>
</comment>
<organism>
    <name type="scientific">Aliivibrio fischeri (strain ATCC 700601 / ES114)</name>
    <name type="common">Vibrio fischeri</name>
    <dbReference type="NCBI Taxonomy" id="312309"/>
    <lineage>
        <taxon>Bacteria</taxon>
        <taxon>Pseudomonadati</taxon>
        <taxon>Pseudomonadota</taxon>
        <taxon>Gammaproteobacteria</taxon>
        <taxon>Vibrionales</taxon>
        <taxon>Vibrionaceae</taxon>
        <taxon>Aliivibrio</taxon>
    </lineage>
</organism>
<name>LGT_ALIF1</name>
<reference key="1">
    <citation type="journal article" date="2005" name="Proc. Natl. Acad. Sci. U.S.A.">
        <title>Complete genome sequence of Vibrio fischeri: a symbiotic bacterium with pathogenic congeners.</title>
        <authorList>
            <person name="Ruby E.G."/>
            <person name="Urbanowski M."/>
            <person name="Campbell J."/>
            <person name="Dunn A."/>
            <person name="Faini M."/>
            <person name="Gunsalus R."/>
            <person name="Lostroh P."/>
            <person name="Lupp C."/>
            <person name="McCann J."/>
            <person name="Millikan D."/>
            <person name="Schaefer A."/>
            <person name="Stabb E."/>
            <person name="Stevens A."/>
            <person name="Visick K."/>
            <person name="Whistler C."/>
            <person name="Greenberg E.P."/>
        </authorList>
    </citation>
    <scope>NUCLEOTIDE SEQUENCE [LARGE SCALE GENOMIC DNA]</scope>
    <source>
        <strain>ATCC 700601 / ES114</strain>
    </source>
</reference>
<evidence type="ECO:0000255" key="1">
    <source>
        <dbReference type="HAMAP-Rule" id="MF_01147"/>
    </source>
</evidence>
<accession>Q5E7P2</accession>
<sequence>MSQGYLNFPHIDPVLIEIGPLAVRWYGLMYLFGFMFALWLANKRADKPNSGWTRDQVSDLLFAGFLGVVIGGRVGYVLFYNFGYFLDNPLYLFEVWTGGMSFHGGLLGVISAMLWYGYKNNRSFFTIADFVAPLVPFGLGAGRLGNFMNGELWGRVTDVPWAMVFPTGGPFPRHPSQLYEFALEGVVLFLILNWFIRKPRPLGTVSGLFLFGYGTFRFLVEYVRQPDAQLGLFGDWISMGQILSLPMVIGGLLMMLWAFKRNLYPSIEQPQSTTKKK</sequence>
<gene>
    <name evidence="1" type="primary">lgt</name>
    <name type="ordered locus">VF_0459</name>
</gene>
<dbReference type="EC" id="2.5.1.145" evidence="1"/>
<dbReference type="EMBL" id="CP000020">
    <property type="protein sequence ID" value="AAW84954.1"/>
    <property type="molecule type" value="Genomic_DNA"/>
</dbReference>
<dbReference type="RefSeq" id="WP_011261237.1">
    <property type="nucleotide sequence ID" value="NC_006840.2"/>
</dbReference>
<dbReference type="RefSeq" id="YP_203842.1">
    <property type="nucleotide sequence ID" value="NC_006840.2"/>
</dbReference>
<dbReference type="SMR" id="Q5E7P2"/>
<dbReference type="STRING" id="312309.VF_0459"/>
<dbReference type="EnsemblBacteria" id="AAW84954">
    <property type="protein sequence ID" value="AAW84954"/>
    <property type="gene ID" value="VF_0459"/>
</dbReference>
<dbReference type="GeneID" id="54163095"/>
<dbReference type="KEGG" id="vfi:VF_0459"/>
<dbReference type="PATRIC" id="fig|312309.11.peg.449"/>
<dbReference type="eggNOG" id="COG0682">
    <property type="taxonomic scope" value="Bacteria"/>
</dbReference>
<dbReference type="HOGENOM" id="CLU_013386_1_0_6"/>
<dbReference type="OrthoDB" id="871140at2"/>
<dbReference type="UniPathway" id="UPA00664"/>
<dbReference type="Proteomes" id="UP000000537">
    <property type="component" value="Chromosome I"/>
</dbReference>
<dbReference type="GO" id="GO:0005886">
    <property type="term" value="C:plasma membrane"/>
    <property type="evidence" value="ECO:0007669"/>
    <property type="project" value="UniProtKB-SubCell"/>
</dbReference>
<dbReference type="GO" id="GO:0008961">
    <property type="term" value="F:phosphatidylglycerol-prolipoprotein diacylglyceryl transferase activity"/>
    <property type="evidence" value="ECO:0007669"/>
    <property type="project" value="UniProtKB-UniRule"/>
</dbReference>
<dbReference type="GO" id="GO:0042158">
    <property type="term" value="P:lipoprotein biosynthetic process"/>
    <property type="evidence" value="ECO:0007669"/>
    <property type="project" value="UniProtKB-UniRule"/>
</dbReference>
<dbReference type="HAMAP" id="MF_01147">
    <property type="entry name" value="Lgt"/>
    <property type="match status" value="1"/>
</dbReference>
<dbReference type="InterPro" id="IPR001640">
    <property type="entry name" value="Lgt"/>
</dbReference>
<dbReference type="NCBIfam" id="TIGR00544">
    <property type="entry name" value="lgt"/>
    <property type="match status" value="1"/>
</dbReference>
<dbReference type="PANTHER" id="PTHR30589:SF0">
    <property type="entry name" value="PHOSPHATIDYLGLYCEROL--PROLIPOPROTEIN DIACYLGLYCERYL TRANSFERASE"/>
    <property type="match status" value="1"/>
</dbReference>
<dbReference type="PANTHER" id="PTHR30589">
    <property type="entry name" value="PROLIPOPROTEIN DIACYLGLYCERYL TRANSFERASE"/>
    <property type="match status" value="1"/>
</dbReference>
<dbReference type="Pfam" id="PF01790">
    <property type="entry name" value="LGT"/>
    <property type="match status" value="1"/>
</dbReference>
<dbReference type="PROSITE" id="PS01311">
    <property type="entry name" value="LGT"/>
    <property type="match status" value="1"/>
</dbReference>
<feature type="chain" id="PRO_1000053523" description="Phosphatidylglycerol--prolipoprotein diacylglyceryl transferase">
    <location>
        <begin position="1"/>
        <end position="277"/>
    </location>
</feature>
<feature type="transmembrane region" description="Helical" evidence="1">
    <location>
        <begin position="21"/>
        <end position="41"/>
    </location>
</feature>
<feature type="transmembrane region" description="Helical" evidence="1">
    <location>
        <begin position="60"/>
        <end position="80"/>
    </location>
</feature>
<feature type="transmembrane region" description="Helical" evidence="1">
    <location>
        <begin position="95"/>
        <end position="115"/>
    </location>
</feature>
<feature type="transmembrane region" description="Helical" evidence="1">
    <location>
        <begin position="124"/>
        <end position="144"/>
    </location>
</feature>
<feature type="transmembrane region" description="Helical" evidence="1">
    <location>
        <begin position="176"/>
        <end position="196"/>
    </location>
</feature>
<feature type="transmembrane region" description="Helical" evidence="1">
    <location>
        <begin position="203"/>
        <end position="223"/>
    </location>
</feature>
<feature type="transmembrane region" description="Helical" evidence="1">
    <location>
        <begin position="239"/>
        <end position="259"/>
    </location>
</feature>
<feature type="binding site" evidence="1">
    <location>
        <position position="143"/>
    </location>
    <ligand>
        <name>a 1,2-diacyl-sn-glycero-3-phospho-(1'-sn-glycerol)</name>
        <dbReference type="ChEBI" id="CHEBI:64716"/>
    </ligand>
</feature>
<protein>
    <recommendedName>
        <fullName evidence="1">Phosphatidylglycerol--prolipoprotein diacylglyceryl transferase</fullName>
        <ecNumber evidence="1">2.5.1.145</ecNumber>
    </recommendedName>
</protein>
<keyword id="KW-0997">Cell inner membrane</keyword>
<keyword id="KW-1003">Cell membrane</keyword>
<keyword id="KW-0472">Membrane</keyword>
<keyword id="KW-1185">Reference proteome</keyword>
<keyword id="KW-0808">Transferase</keyword>
<keyword id="KW-0812">Transmembrane</keyword>
<keyword id="KW-1133">Transmembrane helix</keyword>